<dbReference type="EMBL" id="CP001393">
    <property type="protein sequence ID" value="ACM60764.1"/>
    <property type="molecule type" value="Genomic_DNA"/>
</dbReference>
<dbReference type="RefSeq" id="WP_015908097.1">
    <property type="nucleotide sequence ID" value="NC_012034.1"/>
</dbReference>
<dbReference type="SMR" id="B9MKA6"/>
<dbReference type="STRING" id="521460.Athe_1670"/>
<dbReference type="GeneID" id="31773018"/>
<dbReference type="KEGG" id="ate:Athe_1670"/>
<dbReference type="eggNOG" id="COG1699">
    <property type="taxonomic scope" value="Bacteria"/>
</dbReference>
<dbReference type="HOGENOM" id="CLU_112356_0_2_9"/>
<dbReference type="Proteomes" id="UP000007723">
    <property type="component" value="Chromosome"/>
</dbReference>
<dbReference type="GO" id="GO:0005737">
    <property type="term" value="C:cytoplasm"/>
    <property type="evidence" value="ECO:0007669"/>
    <property type="project" value="UniProtKB-SubCell"/>
</dbReference>
<dbReference type="GO" id="GO:0044780">
    <property type="term" value="P:bacterial-type flagellum assembly"/>
    <property type="evidence" value="ECO:0007669"/>
    <property type="project" value="UniProtKB-UniRule"/>
</dbReference>
<dbReference type="GO" id="GO:0006417">
    <property type="term" value="P:regulation of translation"/>
    <property type="evidence" value="ECO:0007669"/>
    <property type="project" value="UniProtKB-KW"/>
</dbReference>
<dbReference type="Gene3D" id="2.30.290.10">
    <property type="entry name" value="BH3618-like"/>
    <property type="match status" value="1"/>
</dbReference>
<dbReference type="HAMAP" id="MF_01185">
    <property type="entry name" value="FliW"/>
    <property type="match status" value="1"/>
</dbReference>
<dbReference type="InterPro" id="IPR003775">
    <property type="entry name" value="Flagellar_assembly_factor_FliW"/>
</dbReference>
<dbReference type="InterPro" id="IPR024046">
    <property type="entry name" value="Flagellar_assmbl_FliW_dom_sf"/>
</dbReference>
<dbReference type="NCBIfam" id="NF009793">
    <property type="entry name" value="PRK13285.1-1"/>
    <property type="match status" value="1"/>
</dbReference>
<dbReference type="NCBIfam" id="NF009798">
    <property type="entry name" value="PRK13285.2-1"/>
    <property type="match status" value="1"/>
</dbReference>
<dbReference type="PANTHER" id="PTHR39190">
    <property type="entry name" value="FLAGELLAR ASSEMBLY FACTOR FLIW"/>
    <property type="match status" value="1"/>
</dbReference>
<dbReference type="PANTHER" id="PTHR39190:SF1">
    <property type="entry name" value="FLAGELLAR ASSEMBLY FACTOR FLIW"/>
    <property type="match status" value="1"/>
</dbReference>
<dbReference type="Pfam" id="PF02623">
    <property type="entry name" value="FliW"/>
    <property type="match status" value="1"/>
</dbReference>
<dbReference type="SUPFAM" id="SSF141457">
    <property type="entry name" value="BH3618-like"/>
    <property type="match status" value="1"/>
</dbReference>
<keyword id="KW-1005">Bacterial flagellum biogenesis</keyword>
<keyword id="KW-0143">Chaperone</keyword>
<keyword id="KW-0963">Cytoplasm</keyword>
<keyword id="KW-0810">Translation regulation</keyword>
<sequence>MVVQKSVVKSRVFGELEVSEENIIFFEEGIPAFENLKKFVIVKEDQSPFYWLQSVEDKDIAFVIINPFEIKPDYEFDLPDEVVNKLEITSAQDVAVFCIVVIPEDVKQTRVNLKAPIIINVHKRKGIQYLLDDERYPLRYYLFENLNSDEQK</sequence>
<comment type="function">
    <text evidence="1">Acts as an anti-CsrA protein, binds CsrA and prevents it from repressing translation of its target genes, one of which is flagellin. Binds to flagellin and participates in the assembly of the flagellum.</text>
</comment>
<comment type="subunit">
    <text evidence="1">Interacts with translational regulator CsrA and flagellin(s).</text>
</comment>
<comment type="subcellular location">
    <subcellularLocation>
        <location evidence="1">Cytoplasm</location>
    </subcellularLocation>
</comment>
<comment type="similarity">
    <text evidence="1">Belongs to the FliW family.</text>
</comment>
<accession>B9MKA6</accession>
<proteinExistence type="inferred from homology"/>
<organism>
    <name type="scientific">Caldicellulosiruptor bescii (strain ATCC BAA-1888 / DSM 6725 / KCTC 15123 / Z-1320)</name>
    <name type="common">Anaerocellum thermophilum</name>
    <dbReference type="NCBI Taxonomy" id="521460"/>
    <lineage>
        <taxon>Bacteria</taxon>
        <taxon>Bacillati</taxon>
        <taxon>Bacillota</taxon>
        <taxon>Bacillota incertae sedis</taxon>
        <taxon>Caldicellulosiruptorales</taxon>
        <taxon>Caldicellulosiruptoraceae</taxon>
        <taxon>Caldicellulosiruptor</taxon>
    </lineage>
</organism>
<evidence type="ECO:0000255" key="1">
    <source>
        <dbReference type="HAMAP-Rule" id="MF_01185"/>
    </source>
</evidence>
<reference key="1">
    <citation type="submission" date="2009-01" db="EMBL/GenBank/DDBJ databases">
        <title>Complete sequence of chromosome of Caldicellulosiruptor becscii DSM 6725.</title>
        <authorList>
            <person name="Lucas S."/>
            <person name="Copeland A."/>
            <person name="Lapidus A."/>
            <person name="Glavina del Rio T."/>
            <person name="Tice H."/>
            <person name="Bruce D."/>
            <person name="Goodwin L."/>
            <person name="Pitluck S."/>
            <person name="Sims D."/>
            <person name="Meincke L."/>
            <person name="Brettin T."/>
            <person name="Detter J.C."/>
            <person name="Han C."/>
            <person name="Larimer F."/>
            <person name="Land M."/>
            <person name="Hauser L."/>
            <person name="Kyrpides N."/>
            <person name="Ovchinnikova G."/>
            <person name="Kataeva I."/>
            <person name="Adams M.W.W."/>
        </authorList>
    </citation>
    <scope>NUCLEOTIDE SEQUENCE [LARGE SCALE GENOMIC DNA]</scope>
    <source>
        <strain>ATCC BAA-1888 / DSM 6725 / KCTC 15123 / Z-1320</strain>
    </source>
</reference>
<gene>
    <name evidence="1" type="primary">fliW</name>
    <name type="ordered locus">Athe_1670</name>
</gene>
<feature type="chain" id="PRO_1000164461" description="Flagellar assembly factor FliW">
    <location>
        <begin position="1"/>
        <end position="152"/>
    </location>
</feature>
<protein>
    <recommendedName>
        <fullName evidence="1">Flagellar assembly factor FliW</fullName>
    </recommendedName>
</protein>
<name>FLIW_CALBD</name>